<keyword id="KW-0963">Cytoplasm</keyword>
<keyword id="KW-0489">Methyltransferase</keyword>
<keyword id="KW-0539">Nucleus</keyword>
<keyword id="KW-1185">Reference proteome</keyword>
<keyword id="KW-0949">S-adenosyl-L-methionine</keyword>
<keyword id="KW-0808">Transferase</keyword>
<accession>Q6CPN1</accession>
<organism>
    <name type="scientific">Kluyveromyces lactis (strain ATCC 8585 / CBS 2359 / DSM 70799 / NBRC 1267 / NRRL Y-1140 / WM37)</name>
    <name type="common">Yeast</name>
    <name type="synonym">Candida sphaerica</name>
    <dbReference type="NCBI Taxonomy" id="284590"/>
    <lineage>
        <taxon>Eukaryota</taxon>
        <taxon>Fungi</taxon>
        <taxon>Dikarya</taxon>
        <taxon>Ascomycota</taxon>
        <taxon>Saccharomycotina</taxon>
        <taxon>Saccharomycetes</taxon>
        <taxon>Saccharomycetales</taxon>
        <taxon>Saccharomycetaceae</taxon>
        <taxon>Kluyveromyces</taxon>
    </lineage>
</organism>
<reference key="1">
    <citation type="journal article" date="2004" name="Nature">
        <title>Genome evolution in yeasts.</title>
        <authorList>
            <person name="Dujon B."/>
            <person name="Sherman D."/>
            <person name="Fischer G."/>
            <person name="Durrens P."/>
            <person name="Casaregola S."/>
            <person name="Lafontaine I."/>
            <person name="de Montigny J."/>
            <person name="Marck C."/>
            <person name="Neuveglise C."/>
            <person name="Talla E."/>
            <person name="Goffard N."/>
            <person name="Frangeul L."/>
            <person name="Aigle M."/>
            <person name="Anthouard V."/>
            <person name="Babour A."/>
            <person name="Barbe V."/>
            <person name="Barnay S."/>
            <person name="Blanchin S."/>
            <person name="Beckerich J.-M."/>
            <person name="Beyne E."/>
            <person name="Bleykasten C."/>
            <person name="Boisrame A."/>
            <person name="Boyer J."/>
            <person name="Cattolico L."/>
            <person name="Confanioleri F."/>
            <person name="de Daruvar A."/>
            <person name="Despons L."/>
            <person name="Fabre E."/>
            <person name="Fairhead C."/>
            <person name="Ferry-Dumazet H."/>
            <person name="Groppi A."/>
            <person name="Hantraye F."/>
            <person name="Hennequin C."/>
            <person name="Jauniaux N."/>
            <person name="Joyet P."/>
            <person name="Kachouri R."/>
            <person name="Kerrest A."/>
            <person name="Koszul R."/>
            <person name="Lemaire M."/>
            <person name="Lesur I."/>
            <person name="Ma L."/>
            <person name="Muller H."/>
            <person name="Nicaud J.-M."/>
            <person name="Nikolski M."/>
            <person name="Oztas S."/>
            <person name="Ozier-Kalogeropoulos O."/>
            <person name="Pellenz S."/>
            <person name="Potier S."/>
            <person name="Richard G.-F."/>
            <person name="Straub M.-L."/>
            <person name="Suleau A."/>
            <person name="Swennen D."/>
            <person name="Tekaia F."/>
            <person name="Wesolowski-Louvel M."/>
            <person name="Westhof E."/>
            <person name="Wirth B."/>
            <person name="Zeniou-Meyer M."/>
            <person name="Zivanovic Y."/>
            <person name="Bolotin-Fukuhara M."/>
            <person name="Thierry A."/>
            <person name="Bouchier C."/>
            <person name="Caudron B."/>
            <person name="Scarpelli C."/>
            <person name="Gaillardin C."/>
            <person name="Weissenbach J."/>
            <person name="Wincker P."/>
            <person name="Souciet J.-L."/>
        </authorList>
    </citation>
    <scope>NUCLEOTIDE SEQUENCE [LARGE SCALE GENOMIC DNA]</scope>
    <source>
        <strain>ATCC 8585 / CBS 2359 / DSM 70799 / NBRC 1267 / NRRL Y-1140 / WM37</strain>
    </source>
</reference>
<evidence type="ECO:0000250" key="1">
    <source>
        <dbReference type="UniProtKB" id="Q03305"/>
    </source>
</evidence>
<evidence type="ECO:0000255" key="2">
    <source>
        <dbReference type="PROSITE-ProRule" id="PRU00892"/>
    </source>
</evidence>
<feature type="chain" id="PRO_0000228977" description="Protein arginine N-methyltransferase 2">
    <location>
        <begin position="1"/>
        <end position="407"/>
    </location>
</feature>
<feature type="domain" description="RMT2" evidence="2">
    <location>
        <begin position="186"/>
        <end position="407"/>
    </location>
</feature>
<feature type="binding site" evidence="2">
    <location>
        <position position="193"/>
    </location>
    <ligand>
        <name>S-adenosyl-L-methionine</name>
        <dbReference type="ChEBI" id="CHEBI:59789"/>
    </ligand>
</feature>
<feature type="binding site" evidence="2">
    <location>
        <position position="223"/>
    </location>
    <ligand>
        <name>S-adenosyl-L-methionine</name>
        <dbReference type="ChEBI" id="CHEBI:59789"/>
    </ligand>
</feature>
<feature type="binding site" evidence="2">
    <location>
        <begin position="246"/>
        <end position="251"/>
    </location>
    <ligand>
        <name>S-adenosyl-L-methionine</name>
        <dbReference type="ChEBI" id="CHEBI:59789"/>
    </ligand>
</feature>
<feature type="binding site" evidence="2">
    <location>
        <begin position="267"/>
        <end position="269"/>
    </location>
    <ligand>
        <name>S-adenosyl-L-methionine</name>
        <dbReference type="ChEBI" id="CHEBI:59789"/>
    </ligand>
</feature>
<feature type="binding site" evidence="2">
    <location>
        <begin position="294"/>
        <end position="295"/>
    </location>
    <ligand>
        <name>S-adenosyl-L-methionine</name>
        <dbReference type="ChEBI" id="CHEBI:59789"/>
    </ligand>
</feature>
<feature type="binding site" evidence="2">
    <location>
        <position position="315"/>
    </location>
    <ligand>
        <name>S-adenosyl-L-methionine</name>
        <dbReference type="ChEBI" id="CHEBI:59789"/>
    </ligand>
</feature>
<dbReference type="EC" id="2.1.1.-" evidence="1"/>
<dbReference type="EMBL" id="CR382125">
    <property type="protein sequence ID" value="CAG99195.1"/>
    <property type="molecule type" value="Genomic_DNA"/>
</dbReference>
<dbReference type="RefSeq" id="XP_454108.1">
    <property type="nucleotide sequence ID" value="XM_454108.1"/>
</dbReference>
<dbReference type="SMR" id="Q6CPN1"/>
<dbReference type="FunCoup" id="Q6CPN1">
    <property type="interactions" value="427"/>
</dbReference>
<dbReference type="STRING" id="284590.Q6CPN1"/>
<dbReference type="PaxDb" id="284590-Q6CPN1"/>
<dbReference type="KEGG" id="kla:KLLA0_E03631g"/>
<dbReference type="eggNOG" id="KOG1709">
    <property type="taxonomic scope" value="Eukaryota"/>
</dbReference>
<dbReference type="HOGENOM" id="CLU_033831_0_0_1"/>
<dbReference type="InParanoid" id="Q6CPN1"/>
<dbReference type="OMA" id="NYYYHPR"/>
<dbReference type="Proteomes" id="UP000000598">
    <property type="component" value="Chromosome E"/>
</dbReference>
<dbReference type="GO" id="GO:0005737">
    <property type="term" value="C:cytoplasm"/>
    <property type="evidence" value="ECO:0007669"/>
    <property type="project" value="UniProtKB-SubCell"/>
</dbReference>
<dbReference type="GO" id="GO:0005634">
    <property type="term" value="C:nucleus"/>
    <property type="evidence" value="ECO:0007669"/>
    <property type="project" value="UniProtKB-SubCell"/>
</dbReference>
<dbReference type="GO" id="GO:0019702">
    <property type="term" value="F:protein arginine N5-methyltransferase activity"/>
    <property type="evidence" value="ECO:0007669"/>
    <property type="project" value="TreeGrafter"/>
</dbReference>
<dbReference type="GO" id="GO:0032259">
    <property type="term" value="P:methylation"/>
    <property type="evidence" value="ECO:0007669"/>
    <property type="project" value="UniProtKB-KW"/>
</dbReference>
<dbReference type="FunFam" id="3.40.50.150:FF:000310">
    <property type="entry name" value="Arginine N-methyltransferase 2"/>
    <property type="match status" value="1"/>
</dbReference>
<dbReference type="Gene3D" id="3.40.50.150">
    <property type="entry name" value="Vaccinia Virus protein VP39"/>
    <property type="match status" value="1"/>
</dbReference>
<dbReference type="InterPro" id="IPR017408">
    <property type="entry name" value="Arginine_N-MeTrfase_2"/>
</dbReference>
<dbReference type="InterPro" id="IPR051038">
    <property type="entry name" value="RMT2/GAMT_Mtase"/>
</dbReference>
<dbReference type="InterPro" id="IPR026480">
    <property type="entry name" value="RMT2_dom"/>
</dbReference>
<dbReference type="InterPro" id="IPR029063">
    <property type="entry name" value="SAM-dependent_MTases_sf"/>
</dbReference>
<dbReference type="PANTHER" id="PTHR32379">
    <property type="entry name" value="GUANIDINOACETATE N-METHYLTRANSFERASE"/>
    <property type="match status" value="1"/>
</dbReference>
<dbReference type="PANTHER" id="PTHR32379:SF1">
    <property type="entry name" value="GUANIDINOACETATE N-METHYLTRANSFERASE"/>
    <property type="match status" value="1"/>
</dbReference>
<dbReference type="PIRSF" id="PIRSF038148">
    <property type="entry name" value="Arginine_N-mtfrase-2"/>
    <property type="match status" value="1"/>
</dbReference>
<dbReference type="SUPFAM" id="SSF53335">
    <property type="entry name" value="S-adenosyl-L-methionine-dependent methyltransferases"/>
    <property type="match status" value="1"/>
</dbReference>
<dbReference type="PROSITE" id="PS51559">
    <property type="entry name" value="SAM_RMT2"/>
    <property type="match status" value="1"/>
</dbReference>
<gene>
    <name evidence="1" type="primary">RMT2</name>
    <name type="ordered locus">KLLA0E03531g</name>
</gene>
<protein>
    <recommendedName>
        <fullName evidence="1">Protein arginine N-methyltransferase 2</fullName>
        <ecNumber evidence="1">2.1.1.-</ecNumber>
    </recommendedName>
    <alternativeName>
        <fullName evidence="1">Protein-arginine N5-methyltransferase</fullName>
    </alternativeName>
    <alternativeName>
        <fullName evidence="1">Type IV protein arginine N-methyltransferase</fullName>
        <shortName evidence="1">Type IV PRMT</shortName>
    </alternativeName>
</protein>
<name>RMT2_KLULA</name>
<sequence>MSDLHHLLTFPERPISESSYLPELTRLLSAGIPATYTLEQAAAFERGEEVTEEDSNTTPLHILCRSLPSFEGSSKLSEDEESVVLKLMDTLLEYGAGWNFLDYENKHIGDLVLERKYPQDHCIYQRIVDAGVSAELLLRKIDGGEIEFIEDPEDAATEAATEAATEAEVIEGVTKGSEEAPFEDATAADQATYLKTDLEYTDDALVTKENRDGVMMDWETDIMSMAAKSLVSTRSTDECVVLNIGFGMGIIDNFIQDEKVTKHYICEAHPDVLAKMKETGWFDKENVVILEGRWQSRLNELLDQGEVFFDGIYYDTFSEHYQDMLDLYDVIVGLLKPEGTFSFFNGLGADRPVCYDVYRKIVELDVANYGMECRYQVINLRTLPNWNDVKRSYFNCTYYYHPEIRFA</sequence>
<proteinExistence type="inferred from homology"/>
<comment type="function">
    <text evidence="1">S-adenosyl-L-methionine-dependent protein-arginine N-methyltransferase that methylates the delta-nitrogen atom of arginine residues to form N5-methylarginine (type IV) in target proteins. Monomethylates ribosomal protein L12.</text>
</comment>
<comment type="subunit">
    <text evidence="1">Monomer.</text>
</comment>
<comment type="subcellular location">
    <subcellularLocation>
        <location evidence="1">Cytoplasm</location>
    </subcellularLocation>
    <subcellularLocation>
        <location evidence="1">Nucleus</location>
    </subcellularLocation>
</comment>
<comment type="similarity">
    <text evidence="2">Belongs to the class I-like SAM-binding methyltransferase superfamily. RMT2 methyltransferase family.</text>
</comment>